<gene>
    <name evidence="1" type="primary">coaD</name>
    <name type="ordered locus">RPB_2874</name>
</gene>
<organism>
    <name type="scientific">Rhodopseudomonas palustris (strain HaA2)</name>
    <dbReference type="NCBI Taxonomy" id="316058"/>
    <lineage>
        <taxon>Bacteria</taxon>
        <taxon>Pseudomonadati</taxon>
        <taxon>Pseudomonadota</taxon>
        <taxon>Alphaproteobacteria</taxon>
        <taxon>Hyphomicrobiales</taxon>
        <taxon>Nitrobacteraceae</taxon>
        <taxon>Rhodopseudomonas</taxon>
    </lineage>
</organism>
<sequence>MSRIALYPGSFDPVTNGHLDVVRHAVELCDRLVVAIGIHPGKKPLFTTEERLVMVRRVFEPVAEAAGCAFDCTTYDNLTVTAAQQVGASLMIRGLRDGTDLDYEMQIAGMNETMAPGVHTVFLPASVGVRPITATLVRQIAAMGGDVSAFVPPDVAASLKSKFAG</sequence>
<evidence type="ECO:0000255" key="1">
    <source>
        <dbReference type="HAMAP-Rule" id="MF_00151"/>
    </source>
</evidence>
<reference key="1">
    <citation type="submission" date="2006-01" db="EMBL/GenBank/DDBJ databases">
        <title>Complete sequence of Rhodopseudomonas palustris HaA2.</title>
        <authorList>
            <consortium name="US DOE Joint Genome Institute"/>
            <person name="Copeland A."/>
            <person name="Lucas S."/>
            <person name="Lapidus A."/>
            <person name="Barry K."/>
            <person name="Detter J.C."/>
            <person name="Glavina T."/>
            <person name="Hammon N."/>
            <person name="Israni S."/>
            <person name="Pitluck S."/>
            <person name="Chain P."/>
            <person name="Malfatti S."/>
            <person name="Shin M."/>
            <person name="Vergez L."/>
            <person name="Schmutz J."/>
            <person name="Larimer F."/>
            <person name="Land M."/>
            <person name="Hauser L."/>
            <person name="Pelletier D.A."/>
            <person name="Kyrpides N."/>
            <person name="Anderson I."/>
            <person name="Oda Y."/>
            <person name="Harwood C.S."/>
            <person name="Richardson P."/>
        </authorList>
    </citation>
    <scope>NUCLEOTIDE SEQUENCE [LARGE SCALE GENOMIC DNA]</scope>
    <source>
        <strain>HaA2</strain>
    </source>
</reference>
<name>COAD_RHOP2</name>
<accession>Q2IW34</accession>
<feature type="chain" id="PRO_1000011218" description="Phosphopantetheine adenylyltransferase">
    <location>
        <begin position="1"/>
        <end position="165"/>
    </location>
</feature>
<feature type="binding site" evidence="1">
    <location>
        <begin position="10"/>
        <end position="11"/>
    </location>
    <ligand>
        <name>ATP</name>
        <dbReference type="ChEBI" id="CHEBI:30616"/>
    </ligand>
</feature>
<feature type="binding site" evidence="1">
    <location>
        <position position="10"/>
    </location>
    <ligand>
        <name>substrate</name>
    </ligand>
</feature>
<feature type="binding site" evidence="1">
    <location>
        <position position="18"/>
    </location>
    <ligand>
        <name>ATP</name>
        <dbReference type="ChEBI" id="CHEBI:30616"/>
    </ligand>
</feature>
<feature type="binding site" evidence="1">
    <location>
        <position position="42"/>
    </location>
    <ligand>
        <name>substrate</name>
    </ligand>
</feature>
<feature type="binding site" evidence="1">
    <location>
        <position position="79"/>
    </location>
    <ligand>
        <name>substrate</name>
    </ligand>
</feature>
<feature type="binding site" evidence="1">
    <location>
        <position position="93"/>
    </location>
    <ligand>
        <name>substrate</name>
    </ligand>
</feature>
<feature type="binding site" evidence="1">
    <location>
        <begin position="94"/>
        <end position="96"/>
    </location>
    <ligand>
        <name>ATP</name>
        <dbReference type="ChEBI" id="CHEBI:30616"/>
    </ligand>
</feature>
<feature type="binding site" evidence="1">
    <location>
        <position position="104"/>
    </location>
    <ligand>
        <name>ATP</name>
        <dbReference type="ChEBI" id="CHEBI:30616"/>
    </ligand>
</feature>
<feature type="binding site" evidence="1">
    <location>
        <begin position="129"/>
        <end position="135"/>
    </location>
    <ligand>
        <name>ATP</name>
        <dbReference type="ChEBI" id="CHEBI:30616"/>
    </ligand>
</feature>
<feature type="site" description="Transition state stabilizer" evidence="1">
    <location>
        <position position="18"/>
    </location>
</feature>
<proteinExistence type="inferred from homology"/>
<comment type="function">
    <text evidence="1">Reversibly transfers an adenylyl group from ATP to 4'-phosphopantetheine, yielding dephospho-CoA (dPCoA) and pyrophosphate.</text>
</comment>
<comment type="catalytic activity">
    <reaction evidence="1">
        <text>(R)-4'-phosphopantetheine + ATP + H(+) = 3'-dephospho-CoA + diphosphate</text>
        <dbReference type="Rhea" id="RHEA:19801"/>
        <dbReference type="ChEBI" id="CHEBI:15378"/>
        <dbReference type="ChEBI" id="CHEBI:30616"/>
        <dbReference type="ChEBI" id="CHEBI:33019"/>
        <dbReference type="ChEBI" id="CHEBI:57328"/>
        <dbReference type="ChEBI" id="CHEBI:61723"/>
        <dbReference type="EC" id="2.7.7.3"/>
    </reaction>
</comment>
<comment type="cofactor">
    <cofactor evidence="1">
        <name>Mg(2+)</name>
        <dbReference type="ChEBI" id="CHEBI:18420"/>
    </cofactor>
</comment>
<comment type="pathway">
    <text evidence="1">Cofactor biosynthesis; coenzyme A biosynthesis; CoA from (R)-pantothenate: step 4/5.</text>
</comment>
<comment type="subunit">
    <text evidence="1">Homohexamer.</text>
</comment>
<comment type="subcellular location">
    <subcellularLocation>
        <location evidence="1">Cytoplasm</location>
    </subcellularLocation>
</comment>
<comment type="similarity">
    <text evidence="1">Belongs to the bacterial CoaD family.</text>
</comment>
<protein>
    <recommendedName>
        <fullName evidence="1">Phosphopantetheine adenylyltransferase</fullName>
        <ecNumber evidence="1">2.7.7.3</ecNumber>
    </recommendedName>
    <alternativeName>
        <fullName evidence="1">Dephospho-CoA pyrophosphorylase</fullName>
    </alternativeName>
    <alternativeName>
        <fullName evidence="1">Pantetheine-phosphate adenylyltransferase</fullName>
        <shortName evidence="1">PPAT</shortName>
    </alternativeName>
</protein>
<keyword id="KW-0067">ATP-binding</keyword>
<keyword id="KW-0173">Coenzyme A biosynthesis</keyword>
<keyword id="KW-0963">Cytoplasm</keyword>
<keyword id="KW-0460">Magnesium</keyword>
<keyword id="KW-0547">Nucleotide-binding</keyword>
<keyword id="KW-0548">Nucleotidyltransferase</keyword>
<keyword id="KW-1185">Reference proteome</keyword>
<keyword id="KW-0808">Transferase</keyword>
<dbReference type="EC" id="2.7.7.3" evidence="1"/>
<dbReference type="EMBL" id="CP000250">
    <property type="protein sequence ID" value="ABD07576.1"/>
    <property type="molecule type" value="Genomic_DNA"/>
</dbReference>
<dbReference type="RefSeq" id="WP_011441761.1">
    <property type="nucleotide sequence ID" value="NC_007778.1"/>
</dbReference>
<dbReference type="SMR" id="Q2IW34"/>
<dbReference type="STRING" id="316058.RPB_2874"/>
<dbReference type="KEGG" id="rpb:RPB_2874"/>
<dbReference type="eggNOG" id="COG0669">
    <property type="taxonomic scope" value="Bacteria"/>
</dbReference>
<dbReference type="HOGENOM" id="CLU_100149_0_1_5"/>
<dbReference type="OrthoDB" id="9806661at2"/>
<dbReference type="UniPathway" id="UPA00241">
    <property type="reaction ID" value="UER00355"/>
</dbReference>
<dbReference type="Proteomes" id="UP000008809">
    <property type="component" value="Chromosome"/>
</dbReference>
<dbReference type="GO" id="GO:0005737">
    <property type="term" value="C:cytoplasm"/>
    <property type="evidence" value="ECO:0007669"/>
    <property type="project" value="UniProtKB-SubCell"/>
</dbReference>
<dbReference type="GO" id="GO:0005524">
    <property type="term" value="F:ATP binding"/>
    <property type="evidence" value="ECO:0007669"/>
    <property type="project" value="UniProtKB-KW"/>
</dbReference>
<dbReference type="GO" id="GO:0004595">
    <property type="term" value="F:pantetheine-phosphate adenylyltransferase activity"/>
    <property type="evidence" value="ECO:0007669"/>
    <property type="project" value="UniProtKB-UniRule"/>
</dbReference>
<dbReference type="GO" id="GO:0015937">
    <property type="term" value="P:coenzyme A biosynthetic process"/>
    <property type="evidence" value="ECO:0007669"/>
    <property type="project" value="UniProtKB-UniRule"/>
</dbReference>
<dbReference type="CDD" id="cd02163">
    <property type="entry name" value="PPAT"/>
    <property type="match status" value="1"/>
</dbReference>
<dbReference type="Gene3D" id="3.40.50.620">
    <property type="entry name" value="HUPs"/>
    <property type="match status" value="1"/>
</dbReference>
<dbReference type="HAMAP" id="MF_00151">
    <property type="entry name" value="PPAT_bact"/>
    <property type="match status" value="1"/>
</dbReference>
<dbReference type="InterPro" id="IPR004821">
    <property type="entry name" value="Cyt_trans-like"/>
</dbReference>
<dbReference type="InterPro" id="IPR001980">
    <property type="entry name" value="PPAT"/>
</dbReference>
<dbReference type="InterPro" id="IPR014729">
    <property type="entry name" value="Rossmann-like_a/b/a_fold"/>
</dbReference>
<dbReference type="NCBIfam" id="TIGR01510">
    <property type="entry name" value="coaD_prev_kdtB"/>
    <property type="match status" value="1"/>
</dbReference>
<dbReference type="NCBIfam" id="TIGR00125">
    <property type="entry name" value="cyt_tran_rel"/>
    <property type="match status" value="1"/>
</dbReference>
<dbReference type="PANTHER" id="PTHR21342">
    <property type="entry name" value="PHOSPHOPANTETHEINE ADENYLYLTRANSFERASE"/>
    <property type="match status" value="1"/>
</dbReference>
<dbReference type="PANTHER" id="PTHR21342:SF1">
    <property type="entry name" value="PHOSPHOPANTETHEINE ADENYLYLTRANSFERASE"/>
    <property type="match status" value="1"/>
</dbReference>
<dbReference type="Pfam" id="PF01467">
    <property type="entry name" value="CTP_transf_like"/>
    <property type="match status" value="1"/>
</dbReference>
<dbReference type="PRINTS" id="PR01020">
    <property type="entry name" value="LPSBIOSNTHSS"/>
</dbReference>
<dbReference type="SUPFAM" id="SSF52374">
    <property type="entry name" value="Nucleotidylyl transferase"/>
    <property type="match status" value="1"/>
</dbReference>